<evidence type="ECO:0000255" key="1">
    <source>
        <dbReference type="HAMAP-Rule" id="MF_00154"/>
    </source>
</evidence>
<proteinExistence type="inferred from homology"/>
<organism>
    <name type="scientific">Ruegeria sp. (strain TM1040)</name>
    <name type="common">Silicibacter sp.</name>
    <dbReference type="NCBI Taxonomy" id="292414"/>
    <lineage>
        <taxon>Bacteria</taxon>
        <taxon>Pseudomonadati</taxon>
        <taxon>Pseudomonadota</taxon>
        <taxon>Alphaproteobacteria</taxon>
        <taxon>Rhodobacterales</taxon>
        <taxon>Roseobacteraceae</taxon>
        <taxon>Ruegeria</taxon>
    </lineage>
</organism>
<name>COXX_RUEST</name>
<gene>
    <name evidence="1" type="primary">ctaB</name>
    <name type="ordered locus">TM1040_2335</name>
</gene>
<feature type="chain" id="PRO_0000327150" description="Protoheme IX farnesyltransferase">
    <location>
        <begin position="1"/>
        <end position="313"/>
    </location>
</feature>
<feature type="transmembrane region" description="Helical" evidence="1">
    <location>
        <begin position="22"/>
        <end position="42"/>
    </location>
</feature>
<feature type="transmembrane region" description="Helical" evidence="1">
    <location>
        <begin position="46"/>
        <end position="66"/>
    </location>
</feature>
<feature type="transmembrane region" description="Helical" evidence="1">
    <location>
        <begin position="98"/>
        <end position="118"/>
    </location>
</feature>
<feature type="transmembrane region" description="Helical" evidence="1">
    <location>
        <begin position="121"/>
        <end position="141"/>
    </location>
</feature>
<feature type="transmembrane region" description="Helical" evidence="1">
    <location>
        <begin position="150"/>
        <end position="170"/>
    </location>
</feature>
<feature type="transmembrane region" description="Helical" evidence="1">
    <location>
        <begin position="177"/>
        <end position="197"/>
    </location>
</feature>
<feature type="transmembrane region" description="Helical" evidence="1">
    <location>
        <begin position="223"/>
        <end position="243"/>
    </location>
</feature>
<feature type="transmembrane region" description="Helical" evidence="1">
    <location>
        <begin position="246"/>
        <end position="266"/>
    </location>
</feature>
<feature type="transmembrane region" description="Helical" evidence="1">
    <location>
        <begin position="284"/>
        <end position="304"/>
    </location>
</feature>
<protein>
    <recommendedName>
        <fullName evidence="1">Protoheme IX farnesyltransferase</fullName>
        <ecNumber evidence="1">2.5.1.141</ecNumber>
    </recommendedName>
    <alternativeName>
        <fullName evidence="1">Heme B farnesyltransferase</fullName>
    </alternativeName>
    <alternativeName>
        <fullName evidence="1">Heme O synthase</fullName>
    </alternativeName>
</protein>
<reference key="1">
    <citation type="submission" date="2006-05" db="EMBL/GenBank/DDBJ databases">
        <title>Complete sequence of chromosome of Silicibacter sp. TM1040.</title>
        <authorList>
            <consortium name="US DOE Joint Genome Institute"/>
            <person name="Copeland A."/>
            <person name="Lucas S."/>
            <person name="Lapidus A."/>
            <person name="Barry K."/>
            <person name="Detter J.C."/>
            <person name="Glavina del Rio T."/>
            <person name="Hammon N."/>
            <person name="Israni S."/>
            <person name="Dalin E."/>
            <person name="Tice H."/>
            <person name="Pitluck S."/>
            <person name="Brettin T."/>
            <person name="Bruce D."/>
            <person name="Han C."/>
            <person name="Tapia R."/>
            <person name="Goodwin L."/>
            <person name="Thompson L.S."/>
            <person name="Gilna P."/>
            <person name="Schmutz J."/>
            <person name="Larimer F."/>
            <person name="Land M."/>
            <person name="Hauser L."/>
            <person name="Kyrpides N."/>
            <person name="Kim E."/>
            <person name="Belas R."/>
            <person name="Moran M.A."/>
            <person name="Buchan A."/>
            <person name="Gonzalez J.M."/>
            <person name="Schell M.A."/>
            <person name="Sun F."/>
            <person name="Richardson P."/>
        </authorList>
    </citation>
    <scope>NUCLEOTIDE SEQUENCE [LARGE SCALE GENOMIC DNA]</scope>
    <source>
        <strain>TM1040</strain>
    </source>
</reference>
<sequence>MTDASINASMTREEEASLGDYFALLKPRVMSLVVFTAFVGLMAAPIGVHPVIGFCAILFIAIGGGASGALNMWWDADIDQVMKRTKGRPIPAGKVDKGEALSLGLALSGLSVIMLALATNVFAGAFLAFTIFFYVVIYTMWLKRATPQNIVIGGAAGAFPPVIGWIAATGSMSVEPWLMFALTFLWTPPHFWALALFMRNDYDMADVPMLTVTHGRRSTRKHILVYTVILAAFALTTAFTSVGGPIYLTTAVVLNALFLKGAVQIWRRDEEICESDNFKIERSFFKLSLLYLFLHFGAILAEALLKPYGLGGW</sequence>
<dbReference type="EC" id="2.5.1.141" evidence="1"/>
<dbReference type="EMBL" id="CP000377">
    <property type="protein sequence ID" value="ABF65067.1"/>
    <property type="molecule type" value="Genomic_DNA"/>
</dbReference>
<dbReference type="RefSeq" id="WP_011539655.1">
    <property type="nucleotide sequence ID" value="NC_008044.1"/>
</dbReference>
<dbReference type="SMR" id="Q1GE49"/>
<dbReference type="STRING" id="292414.TM1040_2335"/>
<dbReference type="KEGG" id="sit:TM1040_2335"/>
<dbReference type="eggNOG" id="COG0109">
    <property type="taxonomic scope" value="Bacteria"/>
</dbReference>
<dbReference type="HOGENOM" id="CLU_029631_0_2_5"/>
<dbReference type="OrthoDB" id="9814417at2"/>
<dbReference type="UniPathway" id="UPA00834">
    <property type="reaction ID" value="UER00712"/>
</dbReference>
<dbReference type="Proteomes" id="UP000000636">
    <property type="component" value="Chromosome"/>
</dbReference>
<dbReference type="GO" id="GO:0005886">
    <property type="term" value="C:plasma membrane"/>
    <property type="evidence" value="ECO:0007669"/>
    <property type="project" value="UniProtKB-SubCell"/>
</dbReference>
<dbReference type="GO" id="GO:0008495">
    <property type="term" value="F:protoheme IX farnesyltransferase activity"/>
    <property type="evidence" value="ECO:0007669"/>
    <property type="project" value="UniProtKB-UniRule"/>
</dbReference>
<dbReference type="GO" id="GO:0048034">
    <property type="term" value="P:heme O biosynthetic process"/>
    <property type="evidence" value="ECO:0007669"/>
    <property type="project" value="UniProtKB-UniRule"/>
</dbReference>
<dbReference type="CDD" id="cd13957">
    <property type="entry name" value="PT_UbiA_Cox10"/>
    <property type="match status" value="1"/>
</dbReference>
<dbReference type="Gene3D" id="1.10.357.140">
    <property type="entry name" value="UbiA prenyltransferase"/>
    <property type="match status" value="1"/>
</dbReference>
<dbReference type="HAMAP" id="MF_00154">
    <property type="entry name" value="CyoE_CtaB"/>
    <property type="match status" value="1"/>
</dbReference>
<dbReference type="InterPro" id="IPR006369">
    <property type="entry name" value="Protohaem_IX_farnesylTrfase"/>
</dbReference>
<dbReference type="InterPro" id="IPR000537">
    <property type="entry name" value="UbiA_prenyltransferase"/>
</dbReference>
<dbReference type="InterPro" id="IPR030470">
    <property type="entry name" value="UbiA_prenylTrfase_CS"/>
</dbReference>
<dbReference type="InterPro" id="IPR044878">
    <property type="entry name" value="UbiA_sf"/>
</dbReference>
<dbReference type="NCBIfam" id="TIGR01473">
    <property type="entry name" value="cyoE_ctaB"/>
    <property type="match status" value="1"/>
</dbReference>
<dbReference type="NCBIfam" id="NF003349">
    <property type="entry name" value="PRK04375.1-2"/>
    <property type="match status" value="1"/>
</dbReference>
<dbReference type="PANTHER" id="PTHR43448:SF7">
    <property type="entry name" value="4-HYDROXYBENZOATE SOLANESYLTRANSFERASE"/>
    <property type="match status" value="1"/>
</dbReference>
<dbReference type="PANTHER" id="PTHR43448">
    <property type="entry name" value="PROTOHEME IX FARNESYLTRANSFERASE, MITOCHONDRIAL"/>
    <property type="match status" value="1"/>
</dbReference>
<dbReference type="Pfam" id="PF01040">
    <property type="entry name" value="UbiA"/>
    <property type="match status" value="1"/>
</dbReference>
<dbReference type="PROSITE" id="PS00943">
    <property type="entry name" value="UBIA"/>
    <property type="match status" value="1"/>
</dbReference>
<keyword id="KW-0997">Cell inner membrane</keyword>
<keyword id="KW-1003">Cell membrane</keyword>
<keyword id="KW-0350">Heme biosynthesis</keyword>
<keyword id="KW-0472">Membrane</keyword>
<keyword id="KW-1185">Reference proteome</keyword>
<keyword id="KW-0808">Transferase</keyword>
<keyword id="KW-0812">Transmembrane</keyword>
<keyword id="KW-1133">Transmembrane helix</keyword>
<comment type="function">
    <text evidence="1">Converts heme B (protoheme IX) to heme O by substitution of the vinyl group on carbon 2 of heme B porphyrin ring with a hydroxyethyl farnesyl side group.</text>
</comment>
<comment type="catalytic activity">
    <reaction evidence="1">
        <text>heme b + (2E,6E)-farnesyl diphosphate + H2O = Fe(II)-heme o + diphosphate</text>
        <dbReference type="Rhea" id="RHEA:28070"/>
        <dbReference type="ChEBI" id="CHEBI:15377"/>
        <dbReference type="ChEBI" id="CHEBI:33019"/>
        <dbReference type="ChEBI" id="CHEBI:60344"/>
        <dbReference type="ChEBI" id="CHEBI:60530"/>
        <dbReference type="ChEBI" id="CHEBI:175763"/>
        <dbReference type="EC" id="2.5.1.141"/>
    </reaction>
</comment>
<comment type="pathway">
    <text evidence="1">Porphyrin-containing compound metabolism; heme O biosynthesis; heme O from protoheme: step 1/1.</text>
</comment>
<comment type="subunit">
    <text evidence="1">Interacts with CtaA.</text>
</comment>
<comment type="subcellular location">
    <subcellularLocation>
        <location evidence="1">Cell inner membrane</location>
        <topology evidence="1">Multi-pass membrane protein</topology>
    </subcellularLocation>
</comment>
<comment type="miscellaneous">
    <text evidence="1">Carbon 2 of the heme B porphyrin ring is defined according to the Fischer nomenclature.</text>
</comment>
<comment type="similarity">
    <text evidence="1">Belongs to the UbiA prenyltransferase family. Protoheme IX farnesyltransferase subfamily.</text>
</comment>
<accession>Q1GE49</accession>